<sequence>MMLEHILVLSAYLFSIGIYGLITSRNMVRALMCLELIFNSVNINFVTFSGFFDNRQLRGDIFSVFVFAIAAAEAAIGLAIVSSIYRNRKSTRINQSNLLNK</sequence>
<feature type="chain" id="PRO_0000360337" description="NAD(P)H-quinone oxidoreductase subunit 4L, chloroplastic">
    <location>
        <begin position="1"/>
        <end position="101"/>
    </location>
</feature>
<feature type="transmembrane region" description="Helical" evidence="1">
    <location>
        <begin position="2"/>
        <end position="22"/>
    </location>
</feature>
<feature type="transmembrane region" description="Helical" evidence="1">
    <location>
        <begin position="32"/>
        <end position="52"/>
    </location>
</feature>
<feature type="transmembrane region" description="Helical" evidence="1">
    <location>
        <begin position="61"/>
        <end position="81"/>
    </location>
</feature>
<reference key="1">
    <citation type="journal article" date="2007" name="Mol. Biol. Evol.">
        <title>Gene relocations within chloroplast genomes of Jasminum and Menodora (Oleaceae) are due to multiple, overlapping inversions.</title>
        <authorList>
            <person name="Lee H.-L."/>
            <person name="Jansen R.K."/>
            <person name="Chumley T.W."/>
            <person name="Kim K.-J."/>
        </authorList>
    </citation>
    <scope>NUCLEOTIDE SEQUENCE [LARGE SCALE GENOMIC DNA]</scope>
</reference>
<evidence type="ECO:0000255" key="1">
    <source>
        <dbReference type="HAMAP-Rule" id="MF_01456"/>
    </source>
</evidence>
<gene>
    <name evidence="1" type="primary">ndhE</name>
    <name type="ORF">JNC1295</name>
</gene>
<protein>
    <recommendedName>
        <fullName evidence="1">NAD(P)H-quinone oxidoreductase subunit 4L, chloroplastic</fullName>
        <ecNumber evidence="1">7.1.1.-</ecNumber>
    </recommendedName>
    <alternativeName>
        <fullName evidence="1">NAD(P)H dehydrogenase subunit 4L</fullName>
    </alternativeName>
    <alternativeName>
        <fullName evidence="1">NADH-plastoquinone oxidoreductase subunit 4L</fullName>
    </alternativeName>
</protein>
<geneLocation type="chloroplast"/>
<proteinExistence type="inferred from homology"/>
<dbReference type="EC" id="7.1.1.-" evidence="1"/>
<dbReference type="EMBL" id="DQ673255">
    <property type="protein sequence ID" value="ABG74681.1"/>
    <property type="molecule type" value="Genomic_DNA"/>
</dbReference>
<dbReference type="RefSeq" id="YP_778543.1">
    <property type="nucleotide sequence ID" value="NC_008407.1"/>
</dbReference>
<dbReference type="SMR" id="Q06R78"/>
<dbReference type="GeneID" id="4319834"/>
<dbReference type="GO" id="GO:0009535">
    <property type="term" value="C:chloroplast thylakoid membrane"/>
    <property type="evidence" value="ECO:0007669"/>
    <property type="project" value="UniProtKB-SubCell"/>
</dbReference>
<dbReference type="GO" id="GO:0030964">
    <property type="term" value="C:NADH dehydrogenase complex"/>
    <property type="evidence" value="ECO:0007669"/>
    <property type="project" value="TreeGrafter"/>
</dbReference>
<dbReference type="GO" id="GO:0016655">
    <property type="term" value="F:oxidoreductase activity, acting on NAD(P)H, quinone or similar compound as acceptor"/>
    <property type="evidence" value="ECO:0007669"/>
    <property type="project" value="UniProtKB-UniRule"/>
</dbReference>
<dbReference type="GO" id="GO:0048038">
    <property type="term" value="F:quinone binding"/>
    <property type="evidence" value="ECO:0007669"/>
    <property type="project" value="UniProtKB-KW"/>
</dbReference>
<dbReference type="GO" id="GO:0042773">
    <property type="term" value="P:ATP synthesis coupled electron transport"/>
    <property type="evidence" value="ECO:0007669"/>
    <property type="project" value="InterPro"/>
</dbReference>
<dbReference type="GO" id="GO:0019684">
    <property type="term" value="P:photosynthesis, light reaction"/>
    <property type="evidence" value="ECO:0007669"/>
    <property type="project" value="UniProtKB-UniRule"/>
</dbReference>
<dbReference type="FunFam" id="1.10.287.3510:FF:000001">
    <property type="entry name" value="NADH-quinone oxidoreductase subunit K"/>
    <property type="match status" value="1"/>
</dbReference>
<dbReference type="Gene3D" id="1.10.287.3510">
    <property type="match status" value="1"/>
</dbReference>
<dbReference type="HAMAP" id="MF_01456">
    <property type="entry name" value="NDH1_NuoK"/>
    <property type="match status" value="1"/>
</dbReference>
<dbReference type="InterPro" id="IPR001133">
    <property type="entry name" value="NADH_UbQ_OxRdtase_chain4L/K"/>
</dbReference>
<dbReference type="InterPro" id="IPR039428">
    <property type="entry name" value="NUOK/Mnh_C1-like"/>
</dbReference>
<dbReference type="NCBIfam" id="NF004320">
    <property type="entry name" value="PRK05715.1-2"/>
    <property type="match status" value="1"/>
</dbReference>
<dbReference type="NCBIfam" id="NF004322">
    <property type="entry name" value="PRK05715.1-4"/>
    <property type="match status" value="1"/>
</dbReference>
<dbReference type="NCBIfam" id="NF004323">
    <property type="entry name" value="PRK05715.1-5"/>
    <property type="match status" value="1"/>
</dbReference>
<dbReference type="PANTHER" id="PTHR11434:SF16">
    <property type="entry name" value="NADH-UBIQUINONE OXIDOREDUCTASE CHAIN 4L"/>
    <property type="match status" value="1"/>
</dbReference>
<dbReference type="PANTHER" id="PTHR11434">
    <property type="entry name" value="NADH-UBIQUINONE OXIDOREDUCTASE SUBUNIT ND4L"/>
    <property type="match status" value="1"/>
</dbReference>
<dbReference type="Pfam" id="PF00420">
    <property type="entry name" value="Oxidored_q2"/>
    <property type="match status" value="1"/>
</dbReference>
<keyword id="KW-0150">Chloroplast</keyword>
<keyword id="KW-0472">Membrane</keyword>
<keyword id="KW-0520">NAD</keyword>
<keyword id="KW-0521">NADP</keyword>
<keyword id="KW-0934">Plastid</keyword>
<keyword id="KW-0618">Plastoquinone</keyword>
<keyword id="KW-0874">Quinone</keyword>
<keyword id="KW-0793">Thylakoid</keyword>
<keyword id="KW-1278">Translocase</keyword>
<keyword id="KW-0812">Transmembrane</keyword>
<keyword id="KW-1133">Transmembrane helix</keyword>
<keyword id="KW-0813">Transport</keyword>
<organism>
    <name type="scientific">Jasminum nudiflorum</name>
    <name type="common">Winter jasmine</name>
    <dbReference type="NCBI Taxonomy" id="126431"/>
    <lineage>
        <taxon>Eukaryota</taxon>
        <taxon>Viridiplantae</taxon>
        <taxon>Streptophyta</taxon>
        <taxon>Embryophyta</taxon>
        <taxon>Tracheophyta</taxon>
        <taxon>Spermatophyta</taxon>
        <taxon>Magnoliopsida</taxon>
        <taxon>eudicotyledons</taxon>
        <taxon>Gunneridae</taxon>
        <taxon>Pentapetalae</taxon>
        <taxon>asterids</taxon>
        <taxon>lamiids</taxon>
        <taxon>Lamiales</taxon>
        <taxon>Oleaceae</taxon>
        <taxon>Jasmineae</taxon>
        <taxon>Jasminum</taxon>
    </lineage>
</organism>
<name>NU4LC_JASNU</name>
<accession>Q06R78</accession>
<comment type="function">
    <text evidence="1">NDH shuttles electrons from NAD(P)H:plastoquinone, via FMN and iron-sulfur (Fe-S) centers, to quinones in the photosynthetic chain and possibly in a chloroplast respiratory chain. The immediate electron acceptor for the enzyme in this species is believed to be plastoquinone. Couples the redox reaction to proton translocation, and thus conserves the redox energy in a proton gradient.</text>
</comment>
<comment type="catalytic activity">
    <reaction evidence="1">
        <text>a plastoquinone + NADH + (n+1) H(+)(in) = a plastoquinol + NAD(+) + n H(+)(out)</text>
        <dbReference type="Rhea" id="RHEA:42608"/>
        <dbReference type="Rhea" id="RHEA-COMP:9561"/>
        <dbReference type="Rhea" id="RHEA-COMP:9562"/>
        <dbReference type="ChEBI" id="CHEBI:15378"/>
        <dbReference type="ChEBI" id="CHEBI:17757"/>
        <dbReference type="ChEBI" id="CHEBI:57540"/>
        <dbReference type="ChEBI" id="CHEBI:57945"/>
        <dbReference type="ChEBI" id="CHEBI:62192"/>
    </reaction>
</comment>
<comment type="catalytic activity">
    <reaction evidence="1">
        <text>a plastoquinone + NADPH + (n+1) H(+)(in) = a plastoquinol + NADP(+) + n H(+)(out)</text>
        <dbReference type="Rhea" id="RHEA:42612"/>
        <dbReference type="Rhea" id="RHEA-COMP:9561"/>
        <dbReference type="Rhea" id="RHEA-COMP:9562"/>
        <dbReference type="ChEBI" id="CHEBI:15378"/>
        <dbReference type="ChEBI" id="CHEBI:17757"/>
        <dbReference type="ChEBI" id="CHEBI:57783"/>
        <dbReference type="ChEBI" id="CHEBI:58349"/>
        <dbReference type="ChEBI" id="CHEBI:62192"/>
    </reaction>
</comment>
<comment type="subunit">
    <text evidence="1">NDH is composed of at least 16 different subunits, 5 of which are encoded in the nucleus.</text>
</comment>
<comment type="subcellular location">
    <subcellularLocation>
        <location evidence="1">Plastid</location>
        <location evidence="1">Chloroplast thylakoid membrane</location>
        <topology evidence="1">Multi-pass membrane protein</topology>
    </subcellularLocation>
</comment>
<comment type="similarity">
    <text evidence="1">Belongs to the complex I subunit 4L family.</text>
</comment>